<sequence length="224" mass="25303">MLIEIPNVFSKEEVNQLREELDARTWIDGNQTSGVMASTRKRNQQLDKDDPVVLRIGELIMARLLAHPLFVSAALPLQFYPPLFNRYQGGETFGYHIDNAIRSTSDGMVRTDLSATLFLSEPDTYQGGELVIQDTYGQQSIKLAAGSLVLYPSTSLHQVTPVTSGERTAAFMWLQSMVRDEGQRRLLFQLDQSIQALTAQAAPERELFNLTGVYHNLLRRWSEL</sequence>
<gene>
    <name type="ordered locus">Shewmr7_0698</name>
</gene>
<proteinExistence type="inferred from homology"/>
<organism>
    <name type="scientific">Shewanella sp. (strain MR-7)</name>
    <dbReference type="NCBI Taxonomy" id="60481"/>
    <lineage>
        <taxon>Bacteria</taxon>
        <taxon>Pseudomonadati</taxon>
        <taxon>Pseudomonadota</taxon>
        <taxon>Gammaproteobacteria</taxon>
        <taxon>Alteromonadales</taxon>
        <taxon>Shewanellaceae</taxon>
        <taxon>Shewanella</taxon>
    </lineage>
</organism>
<feature type="chain" id="PRO_1000061742" description="PKHD-type hydroxylase Shewmr7_0698">
    <location>
        <begin position="1"/>
        <end position="224"/>
    </location>
</feature>
<feature type="domain" description="Fe2OG dioxygenase" evidence="1">
    <location>
        <begin position="78"/>
        <end position="176"/>
    </location>
</feature>
<feature type="binding site" evidence="1">
    <location>
        <position position="96"/>
    </location>
    <ligand>
        <name>Fe cation</name>
        <dbReference type="ChEBI" id="CHEBI:24875"/>
    </ligand>
</feature>
<feature type="binding site" evidence="1">
    <location>
        <position position="98"/>
    </location>
    <ligand>
        <name>Fe cation</name>
        <dbReference type="ChEBI" id="CHEBI:24875"/>
    </ligand>
</feature>
<feature type="binding site" evidence="1">
    <location>
        <position position="157"/>
    </location>
    <ligand>
        <name>Fe cation</name>
        <dbReference type="ChEBI" id="CHEBI:24875"/>
    </ligand>
</feature>
<feature type="binding site" evidence="1">
    <location>
        <position position="167"/>
    </location>
    <ligand>
        <name>2-oxoglutarate</name>
        <dbReference type="ChEBI" id="CHEBI:16810"/>
    </ligand>
</feature>
<comment type="cofactor">
    <cofactor evidence="1">
        <name>Fe(2+)</name>
        <dbReference type="ChEBI" id="CHEBI:29033"/>
    </cofactor>
    <text evidence="1">Binds 1 Fe(2+) ion per subunit.</text>
</comment>
<comment type="cofactor">
    <cofactor evidence="1">
        <name>L-ascorbate</name>
        <dbReference type="ChEBI" id="CHEBI:38290"/>
    </cofactor>
</comment>
<accession>Q0HYV7</accession>
<name>Y698_SHESR</name>
<dbReference type="EC" id="1.14.11.-" evidence="1"/>
<dbReference type="EMBL" id="CP000444">
    <property type="protein sequence ID" value="ABI41698.1"/>
    <property type="molecule type" value="Genomic_DNA"/>
</dbReference>
<dbReference type="SMR" id="Q0HYV7"/>
<dbReference type="KEGG" id="shm:Shewmr7_0698"/>
<dbReference type="HOGENOM" id="CLU_106663_0_0_6"/>
<dbReference type="GO" id="GO:0016706">
    <property type="term" value="F:2-oxoglutarate-dependent dioxygenase activity"/>
    <property type="evidence" value="ECO:0007669"/>
    <property type="project" value="UniProtKB-UniRule"/>
</dbReference>
<dbReference type="GO" id="GO:0005506">
    <property type="term" value="F:iron ion binding"/>
    <property type="evidence" value="ECO:0007669"/>
    <property type="project" value="UniProtKB-UniRule"/>
</dbReference>
<dbReference type="GO" id="GO:0031418">
    <property type="term" value="F:L-ascorbic acid binding"/>
    <property type="evidence" value="ECO:0007669"/>
    <property type="project" value="UniProtKB-KW"/>
</dbReference>
<dbReference type="GO" id="GO:0006974">
    <property type="term" value="P:DNA damage response"/>
    <property type="evidence" value="ECO:0007669"/>
    <property type="project" value="TreeGrafter"/>
</dbReference>
<dbReference type="GO" id="GO:0006879">
    <property type="term" value="P:intracellular iron ion homeostasis"/>
    <property type="evidence" value="ECO:0007669"/>
    <property type="project" value="TreeGrafter"/>
</dbReference>
<dbReference type="FunFam" id="2.60.120.620:FF:000006">
    <property type="entry name" value="PKHD-type hydroxylase YbiX"/>
    <property type="match status" value="1"/>
</dbReference>
<dbReference type="Gene3D" id="2.60.120.620">
    <property type="entry name" value="q2cbj1_9rhob like domain"/>
    <property type="match status" value="1"/>
</dbReference>
<dbReference type="Gene3D" id="4.10.860.20">
    <property type="entry name" value="Rabenosyn, Rab binding domain"/>
    <property type="match status" value="1"/>
</dbReference>
<dbReference type="HAMAP" id="MF_00657">
    <property type="entry name" value="Hydroxyl_YbiX"/>
    <property type="match status" value="1"/>
</dbReference>
<dbReference type="InterPro" id="IPR005123">
    <property type="entry name" value="Oxoglu/Fe-dep_dioxygenase_dom"/>
</dbReference>
<dbReference type="InterPro" id="IPR041097">
    <property type="entry name" value="PKHD_C"/>
</dbReference>
<dbReference type="InterPro" id="IPR023550">
    <property type="entry name" value="PKHD_hydroxylase"/>
</dbReference>
<dbReference type="InterPro" id="IPR006620">
    <property type="entry name" value="Pro_4_hyd_alph"/>
</dbReference>
<dbReference type="InterPro" id="IPR044862">
    <property type="entry name" value="Pro_4_hyd_alph_FE2OG_OXY"/>
</dbReference>
<dbReference type="NCBIfam" id="NF003974">
    <property type="entry name" value="PRK05467.1-3"/>
    <property type="match status" value="1"/>
</dbReference>
<dbReference type="NCBIfam" id="NF003975">
    <property type="entry name" value="PRK05467.1-4"/>
    <property type="match status" value="1"/>
</dbReference>
<dbReference type="PANTHER" id="PTHR41536">
    <property type="entry name" value="PKHD-TYPE HYDROXYLASE YBIX"/>
    <property type="match status" value="1"/>
</dbReference>
<dbReference type="PANTHER" id="PTHR41536:SF1">
    <property type="entry name" value="PKHD-TYPE HYDROXYLASE YBIX"/>
    <property type="match status" value="1"/>
</dbReference>
<dbReference type="Pfam" id="PF13640">
    <property type="entry name" value="2OG-FeII_Oxy_3"/>
    <property type="match status" value="1"/>
</dbReference>
<dbReference type="Pfam" id="PF18331">
    <property type="entry name" value="PKHD_C"/>
    <property type="match status" value="1"/>
</dbReference>
<dbReference type="SMART" id="SM00702">
    <property type="entry name" value="P4Hc"/>
    <property type="match status" value="1"/>
</dbReference>
<dbReference type="SUPFAM" id="SSF51197">
    <property type="entry name" value="Clavaminate synthase-like"/>
    <property type="match status" value="1"/>
</dbReference>
<dbReference type="PROSITE" id="PS51471">
    <property type="entry name" value="FE2OG_OXY"/>
    <property type="match status" value="1"/>
</dbReference>
<reference key="1">
    <citation type="submission" date="2006-08" db="EMBL/GenBank/DDBJ databases">
        <title>Complete sequence of chromosome 1 of Shewanella sp. MR-7.</title>
        <authorList>
            <person name="Copeland A."/>
            <person name="Lucas S."/>
            <person name="Lapidus A."/>
            <person name="Barry K."/>
            <person name="Detter J.C."/>
            <person name="Glavina del Rio T."/>
            <person name="Hammon N."/>
            <person name="Israni S."/>
            <person name="Dalin E."/>
            <person name="Tice H."/>
            <person name="Pitluck S."/>
            <person name="Kiss H."/>
            <person name="Brettin T."/>
            <person name="Bruce D."/>
            <person name="Han C."/>
            <person name="Tapia R."/>
            <person name="Gilna P."/>
            <person name="Schmutz J."/>
            <person name="Larimer F."/>
            <person name="Land M."/>
            <person name="Hauser L."/>
            <person name="Kyrpides N."/>
            <person name="Mikhailova N."/>
            <person name="Nealson K."/>
            <person name="Konstantinidis K."/>
            <person name="Klappenbach J."/>
            <person name="Tiedje J."/>
            <person name="Richardson P."/>
        </authorList>
    </citation>
    <scope>NUCLEOTIDE SEQUENCE [LARGE SCALE GENOMIC DNA]</scope>
    <source>
        <strain>MR-7</strain>
    </source>
</reference>
<evidence type="ECO:0000255" key="1">
    <source>
        <dbReference type="HAMAP-Rule" id="MF_00657"/>
    </source>
</evidence>
<keyword id="KW-0223">Dioxygenase</keyword>
<keyword id="KW-0408">Iron</keyword>
<keyword id="KW-0479">Metal-binding</keyword>
<keyword id="KW-0560">Oxidoreductase</keyword>
<keyword id="KW-0847">Vitamin C</keyword>
<protein>
    <recommendedName>
        <fullName evidence="1">PKHD-type hydroxylase Shewmr7_0698</fullName>
        <ecNumber evidence="1">1.14.11.-</ecNumber>
    </recommendedName>
</protein>